<accession>Q3J7S8</accession>
<name>SYL_NITOC</name>
<protein>
    <recommendedName>
        <fullName evidence="1">Leucine--tRNA ligase</fullName>
        <ecNumber evidence="1">6.1.1.4</ecNumber>
    </recommendedName>
    <alternativeName>
        <fullName evidence="1">Leucyl-tRNA synthetase</fullName>
        <shortName evidence="1">LeuRS</shortName>
    </alternativeName>
</protein>
<sequence>MDEHYQAIQIEAEAQAYWEQHQSFRASEDPSKEKFYCLSMFPYPSGRLHMGHVRNYTIGDVISRYQRMRGRNVLQPMGWDAFGLPAENAAIQNRVPPAQWTYENIDHMRRQLKRLGFAYDWSRELATCQPDYYRWEQWLFTKLFAKGLVYKKTALVNWDPVDQTVLANEQVIDGRGWRSGALVERREIPQWFLKITAYGEELLTALDGLTGWPEQVRAMQRNWIGRSEGIEVQFHVEGKEALAVFTTRPDTLMGVTFVSVAAEHPLAREAATSNPALAAFLEQCQRTATSEAILETLEKEGMDTGFKAIHPITGEAVPIWVANFVLMGYGTGAVMAVPAHDQRDYEFAKVYGLPIQQVIAPKDDQASCNLEQSAFVEKGLLINSGDFTGLDFDQAFAAIAEHLERGGKGQRRVNYRLRDWGVSRQRYWGAPIPIVHCLHCGAIPVPEEDLPVVLPERVRFDGIRSPLKQLPEFYQTSCPQCGGQAKRETDTFDTFFESSWYYARYCCPDNNATMVDERGDYWLPVDQYIGGIEHAVLHLLYARFFHKVMRDMGLVRSDEPFTHLLTQGMVLKDGAKMSKSKGNTVDPQALIEHYGADTARLFIMFAAPPEQSLEWSESGVEGAHRFLKRLWRIVAAHVEQDPKAALTLKVKDLNSEQKSFRAKVHETIAKASDDIGRRYTFNTAIAAIMELMNALAKFDDSSPQGQAIRQEALEAVVLLLSPITPHICHRLWQELGHREAIIGVPWPEADPDALAKESIELVVQVNGKRRGQITVAVQAPREEIEGQAQAEPNVQRFIEGKTVQKVIIVPNRLVNLVVS</sequence>
<comment type="catalytic activity">
    <reaction evidence="1">
        <text>tRNA(Leu) + L-leucine + ATP = L-leucyl-tRNA(Leu) + AMP + diphosphate</text>
        <dbReference type="Rhea" id="RHEA:11688"/>
        <dbReference type="Rhea" id="RHEA-COMP:9613"/>
        <dbReference type="Rhea" id="RHEA-COMP:9622"/>
        <dbReference type="ChEBI" id="CHEBI:30616"/>
        <dbReference type="ChEBI" id="CHEBI:33019"/>
        <dbReference type="ChEBI" id="CHEBI:57427"/>
        <dbReference type="ChEBI" id="CHEBI:78442"/>
        <dbReference type="ChEBI" id="CHEBI:78494"/>
        <dbReference type="ChEBI" id="CHEBI:456215"/>
        <dbReference type="EC" id="6.1.1.4"/>
    </reaction>
</comment>
<comment type="subcellular location">
    <subcellularLocation>
        <location evidence="1">Cytoplasm</location>
    </subcellularLocation>
</comment>
<comment type="similarity">
    <text evidence="1">Belongs to the class-I aminoacyl-tRNA synthetase family.</text>
</comment>
<evidence type="ECO:0000255" key="1">
    <source>
        <dbReference type="HAMAP-Rule" id="MF_00049"/>
    </source>
</evidence>
<gene>
    <name evidence="1" type="primary">leuS</name>
    <name type="ordered locus">Noc_2665</name>
</gene>
<feature type="chain" id="PRO_1000009381" description="Leucine--tRNA ligase">
    <location>
        <begin position="1"/>
        <end position="819"/>
    </location>
</feature>
<feature type="short sequence motif" description="'HIGH' region">
    <location>
        <begin position="42"/>
        <end position="52"/>
    </location>
</feature>
<feature type="short sequence motif" description="'KMSKS' region">
    <location>
        <begin position="576"/>
        <end position="580"/>
    </location>
</feature>
<feature type="binding site" evidence="1">
    <location>
        <position position="579"/>
    </location>
    <ligand>
        <name>ATP</name>
        <dbReference type="ChEBI" id="CHEBI:30616"/>
    </ligand>
</feature>
<dbReference type="EC" id="6.1.1.4" evidence="1"/>
<dbReference type="EMBL" id="CP000127">
    <property type="protein sequence ID" value="ABA59118.1"/>
    <property type="molecule type" value="Genomic_DNA"/>
</dbReference>
<dbReference type="RefSeq" id="WP_002813910.1">
    <property type="nucleotide sequence ID" value="NC_007484.1"/>
</dbReference>
<dbReference type="SMR" id="Q3J7S8"/>
<dbReference type="FunCoup" id="Q3J7S8">
    <property type="interactions" value="580"/>
</dbReference>
<dbReference type="STRING" id="323261.Noc_2665"/>
<dbReference type="KEGG" id="noc:Noc_2665"/>
<dbReference type="eggNOG" id="COG0495">
    <property type="taxonomic scope" value="Bacteria"/>
</dbReference>
<dbReference type="HOGENOM" id="CLU_004427_0_0_6"/>
<dbReference type="InParanoid" id="Q3J7S8"/>
<dbReference type="Proteomes" id="UP000006838">
    <property type="component" value="Chromosome"/>
</dbReference>
<dbReference type="GO" id="GO:0005829">
    <property type="term" value="C:cytosol"/>
    <property type="evidence" value="ECO:0007669"/>
    <property type="project" value="TreeGrafter"/>
</dbReference>
<dbReference type="GO" id="GO:0002161">
    <property type="term" value="F:aminoacyl-tRNA deacylase activity"/>
    <property type="evidence" value="ECO:0007669"/>
    <property type="project" value="InterPro"/>
</dbReference>
<dbReference type="GO" id="GO:0005524">
    <property type="term" value="F:ATP binding"/>
    <property type="evidence" value="ECO:0007669"/>
    <property type="project" value="UniProtKB-UniRule"/>
</dbReference>
<dbReference type="GO" id="GO:0004823">
    <property type="term" value="F:leucine-tRNA ligase activity"/>
    <property type="evidence" value="ECO:0007669"/>
    <property type="project" value="UniProtKB-UniRule"/>
</dbReference>
<dbReference type="GO" id="GO:0006429">
    <property type="term" value="P:leucyl-tRNA aminoacylation"/>
    <property type="evidence" value="ECO:0007669"/>
    <property type="project" value="UniProtKB-UniRule"/>
</dbReference>
<dbReference type="CDD" id="cd07958">
    <property type="entry name" value="Anticodon_Ia_Leu_BEm"/>
    <property type="match status" value="1"/>
</dbReference>
<dbReference type="CDD" id="cd00812">
    <property type="entry name" value="LeuRS_core"/>
    <property type="match status" value="1"/>
</dbReference>
<dbReference type="FunFam" id="3.10.20.590:FF:000001">
    <property type="entry name" value="Leucine--tRNA ligase"/>
    <property type="match status" value="1"/>
</dbReference>
<dbReference type="FunFam" id="3.40.50.620:FF:000124">
    <property type="entry name" value="Leucine--tRNA ligase"/>
    <property type="match status" value="1"/>
</dbReference>
<dbReference type="FunFam" id="3.40.50.620:FF:000395">
    <property type="entry name" value="Leucine--tRNA ligase"/>
    <property type="match status" value="1"/>
</dbReference>
<dbReference type="FunFam" id="3.90.740.10:FF:000012">
    <property type="entry name" value="Leucine--tRNA ligase"/>
    <property type="match status" value="1"/>
</dbReference>
<dbReference type="FunFam" id="1.10.730.10:FF:000011">
    <property type="entry name" value="Leucine--tRNA ligase chloroplastic/mitochondrial"/>
    <property type="match status" value="1"/>
</dbReference>
<dbReference type="Gene3D" id="3.10.20.590">
    <property type="match status" value="1"/>
</dbReference>
<dbReference type="Gene3D" id="3.40.50.620">
    <property type="entry name" value="HUPs"/>
    <property type="match status" value="2"/>
</dbReference>
<dbReference type="Gene3D" id="1.10.730.10">
    <property type="entry name" value="Isoleucyl-tRNA Synthetase, Domain 1"/>
    <property type="match status" value="1"/>
</dbReference>
<dbReference type="Gene3D" id="3.90.740.10">
    <property type="entry name" value="Valyl/Leucyl/Isoleucyl-tRNA synthetase, editing domain"/>
    <property type="match status" value="1"/>
</dbReference>
<dbReference type="HAMAP" id="MF_00049_B">
    <property type="entry name" value="Leu_tRNA_synth_B"/>
    <property type="match status" value="1"/>
</dbReference>
<dbReference type="InterPro" id="IPR001412">
    <property type="entry name" value="aa-tRNA-synth_I_CS"/>
</dbReference>
<dbReference type="InterPro" id="IPR002300">
    <property type="entry name" value="aa-tRNA-synth_Ia"/>
</dbReference>
<dbReference type="InterPro" id="IPR002302">
    <property type="entry name" value="Leu-tRNA-ligase"/>
</dbReference>
<dbReference type="InterPro" id="IPR025709">
    <property type="entry name" value="Leu_tRNA-synth_edit"/>
</dbReference>
<dbReference type="InterPro" id="IPR013155">
    <property type="entry name" value="M/V/L/I-tRNA-synth_anticd-bd"/>
</dbReference>
<dbReference type="InterPro" id="IPR015413">
    <property type="entry name" value="Methionyl/Leucyl_tRNA_Synth"/>
</dbReference>
<dbReference type="InterPro" id="IPR014729">
    <property type="entry name" value="Rossmann-like_a/b/a_fold"/>
</dbReference>
<dbReference type="InterPro" id="IPR009080">
    <property type="entry name" value="tRNAsynth_Ia_anticodon-bd"/>
</dbReference>
<dbReference type="InterPro" id="IPR009008">
    <property type="entry name" value="Val/Leu/Ile-tRNA-synth_edit"/>
</dbReference>
<dbReference type="NCBIfam" id="TIGR00396">
    <property type="entry name" value="leuS_bact"/>
    <property type="match status" value="1"/>
</dbReference>
<dbReference type="PANTHER" id="PTHR43740:SF2">
    <property type="entry name" value="LEUCINE--TRNA LIGASE, MITOCHONDRIAL"/>
    <property type="match status" value="1"/>
</dbReference>
<dbReference type="PANTHER" id="PTHR43740">
    <property type="entry name" value="LEUCYL-TRNA SYNTHETASE"/>
    <property type="match status" value="1"/>
</dbReference>
<dbReference type="Pfam" id="PF08264">
    <property type="entry name" value="Anticodon_1"/>
    <property type="match status" value="1"/>
</dbReference>
<dbReference type="Pfam" id="PF00133">
    <property type="entry name" value="tRNA-synt_1"/>
    <property type="match status" value="1"/>
</dbReference>
<dbReference type="Pfam" id="PF13603">
    <property type="entry name" value="tRNA-synt_1_2"/>
    <property type="match status" value="1"/>
</dbReference>
<dbReference type="Pfam" id="PF09334">
    <property type="entry name" value="tRNA-synt_1g"/>
    <property type="match status" value="1"/>
</dbReference>
<dbReference type="PRINTS" id="PR00985">
    <property type="entry name" value="TRNASYNTHLEU"/>
</dbReference>
<dbReference type="SUPFAM" id="SSF47323">
    <property type="entry name" value="Anticodon-binding domain of a subclass of class I aminoacyl-tRNA synthetases"/>
    <property type="match status" value="1"/>
</dbReference>
<dbReference type="SUPFAM" id="SSF52374">
    <property type="entry name" value="Nucleotidylyl transferase"/>
    <property type="match status" value="1"/>
</dbReference>
<dbReference type="SUPFAM" id="SSF50677">
    <property type="entry name" value="ValRS/IleRS/LeuRS editing domain"/>
    <property type="match status" value="1"/>
</dbReference>
<dbReference type="PROSITE" id="PS00178">
    <property type="entry name" value="AA_TRNA_LIGASE_I"/>
    <property type="match status" value="1"/>
</dbReference>
<reference key="1">
    <citation type="journal article" date="2006" name="Appl. Environ. Microbiol.">
        <title>Complete genome sequence of the marine, chemolithoautotrophic, ammonia-oxidizing bacterium Nitrosococcus oceani ATCC 19707.</title>
        <authorList>
            <person name="Klotz M.G."/>
            <person name="Arp D.J."/>
            <person name="Chain P.S.G."/>
            <person name="El-Sheikh A.F."/>
            <person name="Hauser L.J."/>
            <person name="Hommes N.G."/>
            <person name="Larimer F.W."/>
            <person name="Malfatti S.A."/>
            <person name="Norton J.M."/>
            <person name="Poret-Peterson A.T."/>
            <person name="Vergez L.M."/>
            <person name="Ward B.B."/>
        </authorList>
    </citation>
    <scope>NUCLEOTIDE SEQUENCE [LARGE SCALE GENOMIC DNA]</scope>
    <source>
        <strain>ATCC 19707 / BCRC 17464 / JCM 30415 / NCIMB 11848 / C-107</strain>
    </source>
</reference>
<keyword id="KW-0030">Aminoacyl-tRNA synthetase</keyword>
<keyword id="KW-0067">ATP-binding</keyword>
<keyword id="KW-0963">Cytoplasm</keyword>
<keyword id="KW-0436">Ligase</keyword>
<keyword id="KW-0547">Nucleotide-binding</keyword>
<keyword id="KW-0648">Protein biosynthesis</keyword>
<keyword id="KW-1185">Reference proteome</keyword>
<proteinExistence type="inferred from homology"/>
<organism>
    <name type="scientific">Nitrosococcus oceani (strain ATCC 19707 / BCRC 17464 / JCM 30415 / NCIMB 11848 / C-107)</name>
    <dbReference type="NCBI Taxonomy" id="323261"/>
    <lineage>
        <taxon>Bacteria</taxon>
        <taxon>Pseudomonadati</taxon>
        <taxon>Pseudomonadota</taxon>
        <taxon>Gammaproteobacteria</taxon>
        <taxon>Chromatiales</taxon>
        <taxon>Chromatiaceae</taxon>
        <taxon>Nitrosococcus</taxon>
    </lineage>
</organism>